<evidence type="ECO:0000255" key="1">
    <source>
        <dbReference type="HAMAP-Rule" id="MF_01066"/>
    </source>
</evidence>
<sequence>MNPVPAQREYFLDSIRAWLMLLGIPFHISLIYSSHTWHVNSAEPSLWLTLFNDFIHSFRMQVFFVISGYFSYMLFLRYPLKKWWKVRVERVGIPMLTAIPLLTLPQFIMLQYVKGKAESWPGLSLYDKYNTLAWELISHLWFLLVLVVMTTLCVWIFKRIRNNLENSDKTNKKFSMVKLSVIFLCLGIGYAVIRRTIFIVYPPILSNGMFNFIVMQTLFYLPFFILGALAFIFPHLKALFTTPSRGCTLAAALAFVAYLLNQRYGSGDAWMYETESVITMVLGLWMVNVVFSFGHRLLNFQSARVTYFVNASLFIYLVHHPLTLFFGAYITPHITSNWLGFLCGLIFVVGIAIILYEIHLRIPLLKFLFSGKPVVKRENDKAPAR</sequence>
<proteinExistence type="inferred from homology"/>
<feature type="chain" id="PRO_1000064517" description="Glucans biosynthesis protein C">
    <location>
        <begin position="1"/>
        <end position="385"/>
    </location>
</feature>
<feature type="transmembrane region" description="Helical" evidence="1">
    <location>
        <begin position="17"/>
        <end position="37"/>
    </location>
</feature>
<feature type="transmembrane region" description="Helical" evidence="1">
    <location>
        <begin position="60"/>
        <end position="80"/>
    </location>
</feature>
<feature type="transmembrane region" description="Helical" evidence="1">
    <location>
        <begin position="91"/>
        <end position="111"/>
    </location>
</feature>
<feature type="transmembrane region" description="Helical" evidence="1">
    <location>
        <begin position="137"/>
        <end position="157"/>
    </location>
</feature>
<feature type="transmembrane region" description="Helical" evidence="1">
    <location>
        <begin position="173"/>
        <end position="193"/>
    </location>
</feature>
<feature type="transmembrane region" description="Helical" evidence="1">
    <location>
        <begin position="212"/>
        <end position="232"/>
    </location>
</feature>
<feature type="transmembrane region" description="Helical" evidence="1">
    <location>
        <begin position="239"/>
        <end position="259"/>
    </location>
</feature>
<feature type="transmembrane region" description="Helical" evidence="1">
    <location>
        <begin position="274"/>
        <end position="294"/>
    </location>
</feature>
<feature type="transmembrane region" description="Helical" evidence="1">
    <location>
        <begin position="311"/>
        <end position="331"/>
    </location>
</feature>
<feature type="transmembrane region" description="Helical" evidence="1">
    <location>
        <begin position="338"/>
        <end position="358"/>
    </location>
</feature>
<organism>
    <name type="scientific">Shigella flexneri serotype 5b (strain 8401)</name>
    <dbReference type="NCBI Taxonomy" id="373384"/>
    <lineage>
        <taxon>Bacteria</taxon>
        <taxon>Pseudomonadati</taxon>
        <taxon>Pseudomonadota</taxon>
        <taxon>Gammaproteobacteria</taxon>
        <taxon>Enterobacterales</taxon>
        <taxon>Enterobacteriaceae</taxon>
        <taxon>Shigella</taxon>
    </lineage>
</organism>
<accession>Q0T5Z5</accession>
<reference key="1">
    <citation type="journal article" date="2006" name="BMC Genomics">
        <title>Complete genome sequence of Shigella flexneri 5b and comparison with Shigella flexneri 2a.</title>
        <authorList>
            <person name="Nie H."/>
            <person name="Yang F."/>
            <person name="Zhang X."/>
            <person name="Yang J."/>
            <person name="Chen L."/>
            <person name="Wang J."/>
            <person name="Xiong Z."/>
            <person name="Peng J."/>
            <person name="Sun L."/>
            <person name="Dong J."/>
            <person name="Xue Y."/>
            <person name="Xu X."/>
            <person name="Chen S."/>
            <person name="Yao Z."/>
            <person name="Shen Y."/>
            <person name="Jin Q."/>
        </authorList>
    </citation>
    <scope>NUCLEOTIDE SEQUENCE [LARGE SCALE GENOMIC DNA]</scope>
    <source>
        <strain>8401</strain>
    </source>
</reference>
<gene>
    <name evidence="1" type="primary">mdoC</name>
    <name evidence="1" type="synonym">opgC</name>
    <name type="ordered locus">SFV_1059</name>
</gene>
<name>OPGC_SHIF8</name>
<protein>
    <recommendedName>
        <fullName evidence="1">Glucans biosynthesis protein C</fullName>
        <ecNumber evidence="1">2.1.-.-</ecNumber>
    </recommendedName>
</protein>
<dbReference type="EC" id="2.1.-.-" evidence="1"/>
<dbReference type="EMBL" id="CP000266">
    <property type="protein sequence ID" value="ABF03270.1"/>
    <property type="molecule type" value="Genomic_DNA"/>
</dbReference>
<dbReference type="RefSeq" id="WP_001070350.1">
    <property type="nucleotide sequence ID" value="NC_008258.1"/>
</dbReference>
<dbReference type="GeneID" id="93776367"/>
<dbReference type="KEGG" id="sfv:SFV_1059"/>
<dbReference type="HOGENOM" id="CLU_036182_2_0_6"/>
<dbReference type="UniPathway" id="UPA00637"/>
<dbReference type="Proteomes" id="UP000000659">
    <property type="component" value="Chromosome"/>
</dbReference>
<dbReference type="GO" id="GO:0005886">
    <property type="term" value="C:plasma membrane"/>
    <property type="evidence" value="ECO:0007669"/>
    <property type="project" value="UniProtKB-SubCell"/>
</dbReference>
<dbReference type="GO" id="GO:0016747">
    <property type="term" value="F:acyltransferase activity, transferring groups other than amino-acyl groups"/>
    <property type="evidence" value="ECO:0007669"/>
    <property type="project" value="InterPro"/>
</dbReference>
<dbReference type="GO" id="GO:0016741">
    <property type="term" value="F:transferase activity, transferring one-carbon groups"/>
    <property type="evidence" value="ECO:0007669"/>
    <property type="project" value="UniProtKB-UniRule"/>
</dbReference>
<dbReference type="GO" id="GO:0009250">
    <property type="term" value="P:glucan biosynthetic process"/>
    <property type="evidence" value="ECO:0007669"/>
    <property type="project" value="UniProtKB-UniRule"/>
</dbReference>
<dbReference type="HAMAP" id="MF_01066">
    <property type="entry name" value="MdoC_OpgC"/>
    <property type="match status" value="1"/>
</dbReference>
<dbReference type="InterPro" id="IPR002656">
    <property type="entry name" value="Acyl_transf_3_dom"/>
</dbReference>
<dbReference type="InterPro" id="IPR050623">
    <property type="entry name" value="Glucan_succinyl_AcylTrfase"/>
</dbReference>
<dbReference type="InterPro" id="IPR023723">
    <property type="entry name" value="Glucans_biosynth_C"/>
</dbReference>
<dbReference type="NCBIfam" id="NF003014">
    <property type="entry name" value="PRK03854.1"/>
    <property type="match status" value="1"/>
</dbReference>
<dbReference type="PANTHER" id="PTHR36927">
    <property type="entry name" value="BLR4337 PROTEIN"/>
    <property type="match status" value="1"/>
</dbReference>
<dbReference type="PANTHER" id="PTHR36927:SF3">
    <property type="entry name" value="GLUCANS BIOSYNTHESIS PROTEIN C"/>
    <property type="match status" value="1"/>
</dbReference>
<dbReference type="Pfam" id="PF01757">
    <property type="entry name" value="Acyl_transf_3"/>
    <property type="match status" value="1"/>
</dbReference>
<comment type="function">
    <text evidence="1">Necessary for the succinyl substitution of periplasmic glucans. Could catalyze the transfer of succinyl residues from the cytoplasmic side of the membrane to the nascent glucan backbones on the periplasmic side of the membrane.</text>
</comment>
<comment type="pathway">
    <text evidence="1">Glycan metabolism; osmoregulated periplasmic glucan (OPG) biosynthesis.</text>
</comment>
<comment type="subcellular location">
    <subcellularLocation>
        <location evidence="1">Cell membrane</location>
        <topology evidence="1">Multi-pass membrane protein</topology>
    </subcellularLocation>
</comment>
<comment type="similarity">
    <text evidence="1">Belongs to the acyltransferase 3 family. OpgC subfamily.</text>
</comment>
<keyword id="KW-0012">Acyltransferase</keyword>
<keyword id="KW-1003">Cell membrane</keyword>
<keyword id="KW-0472">Membrane</keyword>
<keyword id="KW-0808">Transferase</keyword>
<keyword id="KW-0812">Transmembrane</keyword>
<keyword id="KW-1133">Transmembrane helix</keyword>